<sequence length="145" mass="15668">MLNEFKAFIARGNVMDLAVGVIIGGAFGGIVKSLVDDLIMPIVGAIFGGFDFSNYFLPLSSAVNAPTLAAARAQGAVFAYGSFLTVLINFLILAWIIFLMVKGVNYLRMQVERQEEAAPEELPPPPADVQLLTEIRDLLARRPAV</sequence>
<organism>
    <name type="scientific">Rhizobium etli (strain CIAT 652)</name>
    <dbReference type="NCBI Taxonomy" id="491916"/>
    <lineage>
        <taxon>Bacteria</taxon>
        <taxon>Pseudomonadati</taxon>
        <taxon>Pseudomonadota</taxon>
        <taxon>Alphaproteobacteria</taxon>
        <taxon>Hyphomicrobiales</taxon>
        <taxon>Rhizobiaceae</taxon>
        <taxon>Rhizobium/Agrobacterium group</taxon>
        <taxon>Rhizobium</taxon>
    </lineage>
</organism>
<protein>
    <recommendedName>
        <fullName evidence="1">Large-conductance mechanosensitive channel</fullName>
    </recommendedName>
</protein>
<dbReference type="EMBL" id="CP001074">
    <property type="protein sequence ID" value="ACE89631.1"/>
    <property type="molecule type" value="Genomic_DNA"/>
</dbReference>
<dbReference type="KEGG" id="rec:RHECIAT_CH0000640"/>
<dbReference type="eggNOG" id="COG1970">
    <property type="taxonomic scope" value="Bacteria"/>
</dbReference>
<dbReference type="HOGENOM" id="CLU_095787_0_1_5"/>
<dbReference type="Proteomes" id="UP000008817">
    <property type="component" value="Chromosome"/>
</dbReference>
<dbReference type="GO" id="GO:0005886">
    <property type="term" value="C:plasma membrane"/>
    <property type="evidence" value="ECO:0007669"/>
    <property type="project" value="UniProtKB-SubCell"/>
</dbReference>
<dbReference type="GO" id="GO:0008381">
    <property type="term" value="F:mechanosensitive monoatomic ion channel activity"/>
    <property type="evidence" value="ECO:0007669"/>
    <property type="project" value="UniProtKB-UniRule"/>
</dbReference>
<dbReference type="Gene3D" id="1.10.1200.120">
    <property type="entry name" value="Large-conductance mechanosensitive channel, MscL, domain 1"/>
    <property type="match status" value="1"/>
</dbReference>
<dbReference type="HAMAP" id="MF_00115">
    <property type="entry name" value="MscL"/>
    <property type="match status" value="1"/>
</dbReference>
<dbReference type="InterPro" id="IPR019823">
    <property type="entry name" value="Mechanosensitive_channel_CS"/>
</dbReference>
<dbReference type="InterPro" id="IPR001185">
    <property type="entry name" value="MS_channel"/>
</dbReference>
<dbReference type="InterPro" id="IPR037673">
    <property type="entry name" value="MSC/AndL"/>
</dbReference>
<dbReference type="InterPro" id="IPR036019">
    <property type="entry name" value="MscL_channel"/>
</dbReference>
<dbReference type="NCBIfam" id="TIGR00220">
    <property type="entry name" value="mscL"/>
    <property type="match status" value="1"/>
</dbReference>
<dbReference type="NCBIfam" id="NF001843">
    <property type="entry name" value="PRK00567.1-4"/>
    <property type="match status" value="1"/>
</dbReference>
<dbReference type="NCBIfam" id="NF010557">
    <property type="entry name" value="PRK13952.1"/>
    <property type="match status" value="1"/>
</dbReference>
<dbReference type="PANTHER" id="PTHR30266:SF2">
    <property type="entry name" value="LARGE-CONDUCTANCE MECHANOSENSITIVE CHANNEL"/>
    <property type="match status" value="1"/>
</dbReference>
<dbReference type="PANTHER" id="PTHR30266">
    <property type="entry name" value="MECHANOSENSITIVE CHANNEL MSCL"/>
    <property type="match status" value="1"/>
</dbReference>
<dbReference type="Pfam" id="PF01741">
    <property type="entry name" value="MscL"/>
    <property type="match status" value="1"/>
</dbReference>
<dbReference type="PRINTS" id="PR01264">
    <property type="entry name" value="MECHCHANNEL"/>
</dbReference>
<dbReference type="SUPFAM" id="SSF81330">
    <property type="entry name" value="Gated mechanosensitive channel"/>
    <property type="match status" value="1"/>
</dbReference>
<dbReference type="PROSITE" id="PS01327">
    <property type="entry name" value="MSCL"/>
    <property type="match status" value="1"/>
</dbReference>
<proteinExistence type="inferred from homology"/>
<name>MSCL_RHIE6</name>
<accession>B3PNR8</accession>
<gene>
    <name evidence="1" type="primary">mscL</name>
    <name type="ordered locus">RHECIAT_CH0000640</name>
</gene>
<keyword id="KW-0997">Cell inner membrane</keyword>
<keyword id="KW-1003">Cell membrane</keyword>
<keyword id="KW-0407">Ion channel</keyword>
<keyword id="KW-0406">Ion transport</keyword>
<keyword id="KW-0472">Membrane</keyword>
<keyword id="KW-0812">Transmembrane</keyword>
<keyword id="KW-1133">Transmembrane helix</keyword>
<keyword id="KW-0813">Transport</keyword>
<feature type="chain" id="PRO_1000094917" description="Large-conductance mechanosensitive channel">
    <location>
        <begin position="1"/>
        <end position="145"/>
    </location>
</feature>
<feature type="transmembrane region" description="Helical" evidence="1">
    <location>
        <begin position="14"/>
        <end position="34"/>
    </location>
</feature>
<feature type="transmembrane region" description="Helical" evidence="1">
    <location>
        <begin position="38"/>
        <end position="58"/>
    </location>
</feature>
<feature type="transmembrane region" description="Helical" evidence="1">
    <location>
        <begin position="81"/>
        <end position="101"/>
    </location>
</feature>
<comment type="function">
    <text evidence="1">Channel that opens in response to stretch forces in the membrane lipid bilayer. May participate in the regulation of osmotic pressure changes within the cell.</text>
</comment>
<comment type="subunit">
    <text evidence="1">Homopentamer.</text>
</comment>
<comment type="subcellular location">
    <subcellularLocation>
        <location evidence="1">Cell inner membrane</location>
        <topology evidence="1">Multi-pass membrane protein</topology>
    </subcellularLocation>
</comment>
<comment type="similarity">
    <text evidence="1">Belongs to the MscL family.</text>
</comment>
<reference key="1">
    <citation type="journal article" date="2010" name="Appl. Environ. Microbiol.">
        <title>Conserved symbiotic plasmid DNA sequences in the multireplicon pangenomic structure of Rhizobium etli.</title>
        <authorList>
            <person name="Gonzalez V."/>
            <person name="Acosta J.L."/>
            <person name="Santamaria R.I."/>
            <person name="Bustos P."/>
            <person name="Fernandez J.L."/>
            <person name="Hernandez Gonzalez I.L."/>
            <person name="Diaz R."/>
            <person name="Flores M."/>
            <person name="Palacios R."/>
            <person name="Mora J."/>
            <person name="Davila G."/>
        </authorList>
    </citation>
    <scope>NUCLEOTIDE SEQUENCE [LARGE SCALE GENOMIC DNA]</scope>
    <source>
        <strain>CIAT 652</strain>
    </source>
</reference>
<evidence type="ECO:0000255" key="1">
    <source>
        <dbReference type="HAMAP-Rule" id="MF_00115"/>
    </source>
</evidence>